<sequence length="252" mass="27393">MSSSGLQLHIAGKRFGTRQVLRDIDLQLAPGEIVSLIGASGCGKSTLLRILAGLERDYAGEVALDGARVRGVDRQIGFIFQEPRLLPWLDVAANVAFADEADLSPAAARQSARVQQLLAQVGLLDYATALPKQLSGGQAQRVALARGLYRQPRVLLLDEPFSAVDAFTRIKLQDLLLRLAGEHGFSVLLVTHDIDEAVYLSDRVIVIGGQPGTIAHAQRLELPRPRDRQAHEAALRQARQDLLAALHSLHVF</sequence>
<keyword id="KW-0067">ATP-binding</keyword>
<keyword id="KW-0997">Cell inner membrane</keyword>
<keyword id="KW-1003">Cell membrane</keyword>
<keyword id="KW-0472">Membrane</keyword>
<keyword id="KW-0547">Nucleotide-binding</keyword>
<keyword id="KW-1278">Translocase</keyword>
<keyword id="KW-0813">Transport</keyword>
<comment type="function">
    <text evidence="1">Part of the ABC transporter complex SsuABC involved in aliphatic sulfonates import. Responsible for energy coupling to the transport system.</text>
</comment>
<comment type="catalytic activity">
    <reaction evidence="1">
        <text>ATP + H2O + aliphatic sulfonate-[sulfonate-binding protein]Side 1 = ADP + phosphate + aliphatic sulfonateSide 2 + [sulfonate-binding protein]Side 1.</text>
        <dbReference type="EC" id="7.6.2.14"/>
    </reaction>
</comment>
<comment type="subunit">
    <text evidence="1">The complex is composed of two ATP-binding proteins (SsuB), two transmembrane proteins (SsuC) and a solute-binding protein (SsuA).</text>
</comment>
<comment type="subcellular location">
    <subcellularLocation>
        <location evidence="1">Cell inner membrane</location>
        <topology evidence="1">Peripheral membrane protein</topology>
    </subcellularLocation>
</comment>
<comment type="similarity">
    <text evidence="1">Belongs to the ABC transporter superfamily. Aliphatic sulfonates importer (TC 3.A.1.17.2) family.</text>
</comment>
<name>SSUB1_XANAC</name>
<reference key="1">
    <citation type="journal article" date="2002" name="Nature">
        <title>Comparison of the genomes of two Xanthomonas pathogens with differing host specificities.</title>
        <authorList>
            <person name="da Silva A.C.R."/>
            <person name="Ferro J.A."/>
            <person name="Reinach F.C."/>
            <person name="Farah C.S."/>
            <person name="Furlan L.R."/>
            <person name="Quaggio R.B."/>
            <person name="Monteiro-Vitorello C.B."/>
            <person name="Van Sluys M.A."/>
            <person name="Almeida N.F. Jr."/>
            <person name="Alves L.M.C."/>
            <person name="do Amaral A.M."/>
            <person name="Bertolini M.C."/>
            <person name="Camargo L.E.A."/>
            <person name="Camarotte G."/>
            <person name="Cannavan F."/>
            <person name="Cardozo J."/>
            <person name="Chambergo F."/>
            <person name="Ciapina L.P."/>
            <person name="Cicarelli R.M.B."/>
            <person name="Coutinho L.L."/>
            <person name="Cursino-Santos J.R."/>
            <person name="El-Dorry H."/>
            <person name="Faria J.B."/>
            <person name="Ferreira A.J.S."/>
            <person name="Ferreira R.C.C."/>
            <person name="Ferro M.I.T."/>
            <person name="Formighieri E.F."/>
            <person name="Franco M.C."/>
            <person name="Greggio C.C."/>
            <person name="Gruber A."/>
            <person name="Katsuyama A.M."/>
            <person name="Kishi L.T."/>
            <person name="Leite R.P."/>
            <person name="Lemos E.G.M."/>
            <person name="Lemos M.V.F."/>
            <person name="Locali E.C."/>
            <person name="Machado M.A."/>
            <person name="Madeira A.M.B.N."/>
            <person name="Martinez-Rossi N.M."/>
            <person name="Martins E.C."/>
            <person name="Meidanis J."/>
            <person name="Menck C.F.M."/>
            <person name="Miyaki C.Y."/>
            <person name="Moon D.H."/>
            <person name="Moreira L.M."/>
            <person name="Novo M.T.M."/>
            <person name="Okura V.K."/>
            <person name="Oliveira M.C."/>
            <person name="Oliveira V.R."/>
            <person name="Pereira H.A."/>
            <person name="Rossi A."/>
            <person name="Sena J.A.D."/>
            <person name="Silva C."/>
            <person name="de Souza R.F."/>
            <person name="Spinola L.A.F."/>
            <person name="Takita M.A."/>
            <person name="Tamura R.E."/>
            <person name="Teixeira E.C."/>
            <person name="Tezza R.I.D."/>
            <person name="Trindade dos Santos M."/>
            <person name="Truffi D."/>
            <person name="Tsai S.M."/>
            <person name="White F.F."/>
            <person name="Setubal J.C."/>
            <person name="Kitajima J.P."/>
        </authorList>
    </citation>
    <scope>NUCLEOTIDE SEQUENCE [LARGE SCALE GENOMIC DNA]</scope>
    <source>
        <strain>306</strain>
    </source>
</reference>
<accession>Q8PP41</accession>
<organism>
    <name type="scientific">Xanthomonas axonopodis pv. citri (strain 306)</name>
    <dbReference type="NCBI Taxonomy" id="190486"/>
    <lineage>
        <taxon>Bacteria</taxon>
        <taxon>Pseudomonadati</taxon>
        <taxon>Pseudomonadota</taxon>
        <taxon>Gammaproteobacteria</taxon>
        <taxon>Lysobacterales</taxon>
        <taxon>Lysobacteraceae</taxon>
        <taxon>Xanthomonas</taxon>
    </lineage>
</organism>
<protein>
    <recommendedName>
        <fullName evidence="1">Aliphatic sulfonates import ATP-binding protein SsuB 1</fullName>
        <ecNumber evidence="1">7.6.2.14</ecNumber>
    </recommendedName>
</protein>
<proteinExistence type="inferred from homology"/>
<dbReference type="EC" id="7.6.2.14" evidence="1"/>
<dbReference type="EMBL" id="AE008923">
    <property type="protein sequence ID" value="AAM35735.1"/>
    <property type="molecule type" value="Genomic_DNA"/>
</dbReference>
<dbReference type="RefSeq" id="WP_003487417.1">
    <property type="nucleotide sequence ID" value="NC_003919.1"/>
</dbReference>
<dbReference type="SMR" id="Q8PP41"/>
<dbReference type="KEGG" id="xac:XAC0847"/>
<dbReference type="eggNOG" id="COG1116">
    <property type="taxonomic scope" value="Bacteria"/>
</dbReference>
<dbReference type="HOGENOM" id="CLU_000604_1_22_6"/>
<dbReference type="Proteomes" id="UP000000576">
    <property type="component" value="Chromosome"/>
</dbReference>
<dbReference type="GO" id="GO:0005886">
    <property type="term" value="C:plasma membrane"/>
    <property type="evidence" value="ECO:0007669"/>
    <property type="project" value="UniProtKB-SubCell"/>
</dbReference>
<dbReference type="GO" id="GO:0005524">
    <property type="term" value="F:ATP binding"/>
    <property type="evidence" value="ECO:0007669"/>
    <property type="project" value="UniProtKB-KW"/>
</dbReference>
<dbReference type="GO" id="GO:0016887">
    <property type="term" value="F:ATP hydrolysis activity"/>
    <property type="evidence" value="ECO:0007669"/>
    <property type="project" value="InterPro"/>
</dbReference>
<dbReference type="CDD" id="cd03293">
    <property type="entry name" value="ABC_NrtD_SsuB_transporters"/>
    <property type="match status" value="1"/>
</dbReference>
<dbReference type="Gene3D" id="3.40.50.300">
    <property type="entry name" value="P-loop containing nucleotide triphosphate hydrolases"/>
    <property type="match status" value="1"/>
</dbReference>
<dbReference type="InterPro" id="IPR003593">
    <property type="entry name" value="AAA+_ATPase"/>
</dbReference>
<dbReference type="InterPro" id="IPR003439">
    <property type="entry name" value="ABC_transporter-like_ATP-bd"/>
</dbReference>
<dbReference type="InterPro" id="IPR017871">
    <property type="entry name" value="ABC_transporter-like_CS"/>
</dbReference>
<dbReference type="InterPro" id="IPR050166">
    <property type="entry name" value="ABC_transporter_ATP-bind"/>
</dbReference>
<dbReference type="InterPro" id="IPR027417">
    <property type="entry name" value="P-loop_NTPase"/>
</dbReference>
<dbReference type="PANTHER" id="PTHR42788:SF19">
    <property type="entry name" value="ALIPHATIC SULFONATES IMPORT ATP-BINDING PROTEIN SSUB 2"/>
    <property type="match status" value="1"/>
</dbReference>
<dbReference type="PANTHER" id="PTHR42788">
    <property type="entry name" value="TAURINE IMPORT ATP-BINDING PROTEIN-RELATED"/>
    <property type="match status" value="1"/>
</dbReference>
<dbReference type="Pfam" id="PF00005">
    <property type="entry name" value="ABC_tran"/>
    <property type="match status" value="1"/>
</dbReference>
<dbReference type="SMART" id="SM00382">
    <property type="entry name" value="AAA"/>
    <property type="match status" value="1"/>
</dbReference>
<dbReference type="SUPFAM" id="SSF52540">
    <property type="entry name" value="P-loop containing nucleoside triphosphate hydrolases"/>
    <property type="match status" value="1"/>
</dbReference>
<dbReference type="PROSITE" id="PS00211">
    <property type="entry name" value="ABC_TRANSPORTER_1"/>
    <property type="match status" value="1"/>
</dbReference>
<dbReference type="PROSITE" id="PS50893">
    <property type="entry name" value="ABC_TRANSPORTER_2"/>
    <property type="match status" value="1"/>
</dbReference>
<dbReference type="PROSITE" id="PS51291">
    <property type="entry name" value="SSUB"/>
    <property type="match status" value="1"/>
</dbReference>
<feature type="chain" id="PRO_0000279965" description="Aliphatic sulfonates import ATP-binding protein SsuB 1">
    <location>
        <begin position="1"/>
        <end position="252"/>
    </location>
</feature>
<feature type="domain" description="ABC transporter" evidence="1">
    <location>
        <begin position="6"/>
        <end position="234"/>
    </location>
</feature>
<feature type="binding site" evidence="1">
    <location>
        <begin position="38"/>
        <end position="45"/>
    </location>
    <ligand>
        <name>ATP</name>
        <dbReference type="ChEBI" id="CHEBI:30616"/>
    </ligand>
</feature>
<evidence type="ECO:0000255" key="1">
    <source>
        <dbReference type="HAMAP-Rule" id="MF_01724"/>
    </source>
</evidence>
<gene>
    <name evidence="1" type="primary">ssuB1</name>
    <name type="ordered locus">XAC0847</name>
</gene>